<name>USTM_USTVR</name>
<gene>
    <name evidence="3" type="primary">ustM</name>
    <name type="ORF">UVI_02036200</name>
</gene>
<keyword id="KW-0489">Methyltransferase</keyword>
<keyword id="KW-0808">Transferase</keyword>
<sequence length="441" mass="48781">MDMLQFFRDALVQETGRHVDNDDFDALFSELGADPLVGVAVIERVTNKTVEKAPRAARPPREAPLPRGNVRNAFQDACSHVQEFLRKAGSANFWSRVYPAQRQLVLAFVNDAFDRLGCSLADMPVGTIVTYPRGVLDKHRRVFDGAIFEILADGGLVNVDPELGAIRTSTVVDKTPPQQILATIILEHPQFANLHRLLNVTGSQFAECLTGRLDPIKLLFGRSKDLLQDFYTNAPMSLAASLHLVAVIKRLLADGEYRPGKSIDILEVGAGLGGTTRFVVEALIEAQVPFRYVYTDISASFFAASKNRYKSLPPGSSMEFLVLDVEIPPPETLLGGFDVVVSTNCIHATRNLGVSCSNVRKLLRGGGFFALIEFTSRMYWLDLVFGLLDGWWLFEDGRKHCTVDETVWEEKLQLSGFSDVLWADVEGDDKSSLQLLVACTD</sequence>
<evidence type="ECO:0000255" key="1"/>
<evidence type="ECO:0000269" key="2">
    <source>
    </source>
</evidence>
<evidence type="ECO:0000303" key="3">
    <source>
    </source>
</evidence>
<evidence type="ECO:0000305" key="4"/>
<evidence type="ECO:0000305" key="5">
    <source>
    </source>
</evidence>
<protein>
    <recommendedName>
        <fullName evidence="3">Polyketide methyltransferase ustM</fullName>
        <ecNumber evidence="5">2.1.1.-</ecNumber>
    </recommendedName>
    <alternativeName>
        <fullName evidence="3">Ustilaginoidins biosynthesis cluster protein M</fullName>
    </alternativeName>
</protein>
<dbReference type="EC" id="2.1.1.-" evidence="5"/>
<dbReference type="EMBL" id="BBTG02000019">
    <property type="protein sequence ID" value="GAO19029.1"/>
    <property type="molecule type" value="Genomic_DNA"/>
</dbReference>
<dbReference type="SMR" id="A0A1B5L8S2"/>
<dbReference type="Proteomes" id="UP000054053">
    <property type="component" value="Unassembled WGS sequence"/>
</dbReference>
<dbReference type="GO" id="GO:0008168">
    <property type="term" value="F:methyltransferase activity"/>
    <property type="evidence" value="ECO:0007669"/>
    <property type="project" value="UniProtKB-KW"/>
</dbReference>
<dbReference type="GO" id="GO:0009058">
    <property type="term" value="P:biosynthetic process"/>
    <property type="evidence" value="ECO:0007669"/>
    <property type="project" value="UniProtKB-ARBA"/>
</dbReference>
<dbReference type="GO" id="GO:0032259">
    <property type="term" value="P:methylation"/>
    <property type="evidence" value="ECO:0007669"/>
    <property type="project" value="UniProtKB-KW"/>
</dbReference>
<dbReference type="CDD" id="cd02440">
    <property type="entry name" value="AdoMet_MTases"/>
    <property type="match status" value="1"/>
</dbReference>
<dbReference type="Gene3D" id="3.40.50.150">
    <property type="entry name" value="Vaccinia Virus protein VP39"/>
    <property type="match status" value="1"/>
</dbReference>
<dbReference type="InterPro" id="IPR013217">
    <property type="entry name" value="Methyltransf_12"/>
</dbReference>
<dbReference type="InterPro" id="IPR050444">
    <property type="entry name" value="Polyketide_Synthase"/>
</dbReference>
<dbReference type="InterPro" id="IPR029063">
    <property type="entry name" value="SAM-dependent_MTases_sf"/>
</dbReference>
<dbReference type="PANTHER" id="PTHR45681:SF6">
    <property type="entry name" value="POLYKETIDE SYNTHASE 37"/>
    <property type="match status" value="1"/>
</dbReference>
<dbReference type="PANTHER" id="PTHR45681">
    <property type="entry name" value="POLYKETIDE SYNTHASE 44-RELATED"/>
    <property type="match status" value="1"/>
</dbReference>
<dbReference type="Pfam" id="PF18558">
    <property type="entry name" value="HTH_51"/>
    <property type="match status" value="1"/>
</dbReference>
<dbReference type="Pfam" id="PF08242">
    <property type="entry name" value="Methyltransf_12"/>
    <property type="match status" value="1"/>
</dbReference>
<dbReference type="SUPFAM" id="SSF53335">
    <property type="entry name" value="S-adenosyl-L-methionine-dependent methyltransferases"/>
    <property type="match status" value="1"/>
</dbReference>
<comment type="function">
    <text evidence="2 5">Polyketide methyltransferase; part of the gene cluster that mediates the biosynthesis of ustilaginoidins, dimeric gamma-naphthopyrones isolated from different fungal species (PubMed:31050129). The first step in the biosynthesis of ustilaginoidins is the production of gamma-naphthopyrone precursor YWA1 by the non-reducing polyketide synthase ustP, via condensation of one acetyl-CoA starter unit with 6 malonyl-CoA units (PubMed:31050129). YWA1 is then probably substrate of the ustZ to yield norrubrofusarin via a dehydration reaction (Probable). A key enzyme in the biosynthetic pathway is the laccase ustL, which catalyzes the oxidative dimerization of norrubrofusarin to ustilaginoidin A (PubMed:31050129). It can produce the M- and P-atropisomers in varying amounts, depending on the reaction conditions (PubMed:31050129). For the biosynthesis of 3-methylustilaginoid in derivatives such as chaetochromin A, a methylated derivative of YWA1 is required (Probable). The C-methylation is considered to be catalyzed by ustM, the phosphopantetheine attachment site of which indicates that it acts on the growing polyketide chain before release of the product (Probable). For the biosynthesis of chaetochromin A, it is assumed that saturation of the D2 double bond takes place before dimerization, and is probably catalyzed by an external reductase because no candidate gene was identified within the cluster (Probable).</text>
</comment>
<comment type="pathway">
    <text evidence="5">Secondary metabolite biosynthesis.</text>
</comment>
<comment type="similarity">
    <text evidence="4">Belongs to the methyltransferase superfamily.</text>
</comment>
<feature type="chain" id="PRO_0000448924" description="Polyketide methyltransferase ustM">
    <location>
        <begin position="1"/>
        <end position="441"/>
    </location>
</feature>
<feature type="region of interest" description="Methyltransferase (CMeT) domain" evidence="1">
    <location>
        <begin position="266"/>
        <end position="368"/>
    </location>
</feature>
<accession>A0A1B5L8S2</accession>
<reference key="1">
    <citation type="journal article" date="2016" name="Genome Announc.">
        <title>Genome sequence of Ustilaginoidea virens IPU010, a rice pathogenic fungus causing false smut.</title>
        <authorList>
            <person name="Kumagai T."/>
            <person name="Ishii T."/>
            <person name="Terai G."/>
            <person name="Umemura M."/>
            <person name="Machida M."/>
            <person name="Asai K."/>
        </authorList>
    </citation>
    <scope>NUCLEOTIDE SEQUENCE [LARGE SCALE GENOMIC DNA]</scope>
    <source>
        <strain>IPU010</strain>
    </source>
</reference>
<reference key="2">
    <citation type="journal article" date="2019" name="Angew. Chem. Int. Ed.">
        <title>Enantioselective phenol coupling by laccases in the biosynthesis of fungal dimeric naphthopyrones.</title>
        <authorList>
            <person name="Obermaier S."/>
            <person name="Thiele W."/>
            <person name="Fuertges L."/>
            <person name="Mueller M."/>
        </authorList>
    </citation>
    <scope>FUNCTION</scope>
    <scope>PATHWAY</scope>
</reference>
<proteinExistence type="inferred from homology"/>
<organism>
    <name type="scientific">Ustilaginoidea virens</name>
    <name type="common">Rice false smut fungus</name>
    <name type="synonym">Villosiclava virens</name>
    <dbReference type="NCBI Taxonomy" id="1159556"/>
    <lineage>
        <taxon>Eukaryota</taxon>
        <taxon>Fungi</taxon>
        <taxon>Dikarya</taxon>
        <taxon>Ascomycota</taxon>
        <taxon>Pezizomycotina</taxon>
        <taxon>Sordariomycetes</taxon>
        <taxon>Hypocreomycetidae</taxon>
        <taxon>Hypocreales</taxon>
        <taxon>Clavicipitaceae</taxon>
        <taxon>Ustilaginoidea</taxon>
    </lineage>
</organism>